<protein>
    <recommendedName>
        <fullName evidence="1">Chaperonin GroEL 2</fullName>
        <ecNumber evidence="1">5.6.1.7</ecNumber>
    </recommendedName>
    <alternativeName>
        <fullName evidence="1">60 kDa chaperonin 2</fullName>
    </alternativeName>
    <alternativeName>
        <fullName evidence="1">Chaperonin-60 2</fullName>
        <shortName evidence="1">Cpn60 2</shortName>
    </alternativeName>
</protein>
<accession>A3PES4</accession>
<organism>
    <name type="scientific">Prochlorococcus marinus (strain MIT 9301)</name>
    <dbReference type="NCBI Taxonomy" id="167546"/>
    <lineage>
        <taxon>Bacteria</taxon>
        <taxon>Bacillati</taxon>
        <taxon>Cyanobacteriota</taxon>
        <taxon>Cyanophyceae</taxon>
        <taxon>Synechococcales</taxon>
        <taxon>Prochlorococcaceae</taxon>
        <taxon>Prochlorococcus</taxon>
    </lineage>
</organism>
<gene>
    <name evidence="1" type="primary">groEL2</name>
    <name evidence="1" type="synonym">groL2</name>
    <name type="ordered locus">P9301_16261</name>
</gene>
<sequence>MAKRIIYNEQARRALERGIDILAESVAVTLGPKGRNVVLEKKFGAPQIINDGVTIAKEIELEDHIENTGVALIRQAASKTNDAAGDGTTTATVLAHAMVKAGLRNVAAGANAITLKKGIDKATEFLVGKIQENSKPISDSNAIAQCGTIAAGNDDEVGQMIANAMDKVGKEGVISLEEGKSMTTELEVTEGMRFDKGYISPYFATDTERMEAVLDEPYILLTDKKIALVQDLVPVLEQIAKTGKPLVIIAEDIEKEALATLVVNRLRGVLNVAAVKAPGFGDRRKAMLEDMAVLTNGQLITEDAGLKLENATLDMLGTGRRITINKETTTIVAEGNEQAVKARCDQIKKQMDETDSSYDKEKLQERLAKLAGGVAVIKVGAATETEMKDKKLRLEDAINATKAAVEEGIVPGGGTTLAHLSPILKEWADKNLEGEELIGANIVEASLTAPLMRIAENAGSNGAVIAENVKTKPFNDGFNAATGEYVDMSSAGIVDPAKVTRSGLQNAASIAGMVLTTECIVADLPEKKDSAAPAGAPGMGGDFDY</sequence>
<evidence type="ECO:0000255" key="1">
    <source>
        <dbReference type="HAMAP-Rule" id="MF_00600"/>
    </source>
</evidence>
<name>CH602_PROM0</name>
<reference key="1">
    <citation type="journal article" date="2007" name="PLoS Genet.">
        <title>Patterns and implications of gene gain and loss in the evolution of Prochlorococcus.</title>
        <authorList>
            <person name="Kettler G.C."/>
            <person name="Martiny A.C."/>
            <person name="Huang K."/>
            <person name="Zucker J."/>
            <person name="Coleman M.L."/>
            <person name="Rodrigue S."/>
            <person name="Chen F."/>
            <person name="Lapidus A."/>
            <person name="Ferriera S."/>
            <person name="Johnson J."/>
            <person name="Steglich C."/>
            <person name="Church G.M."/>
            <person name="Richardson P."/>
            <person name="Chisholm S.W."/>
        </authorList>
    </citation>
    <scope>NUCLEOTIDE SEQUENCE [LARGE SCALE GENOMIC DNA]</scope>
    <source>
        <strain>MIT 9301</strain>
    </source>
</reference>
<keyword id="KW-0067">ATP-binding</keyword>
<keyword id="KW-0143">Chaperone</keyword>
<keyword id="KW-0963">Cytoplasm</keyword>
<keyword id="KW-0413">Isomerase</keyword>
<keyword id="KW-0547">Nucleotide-binding</keyword>
<keyword id="KW-1185">Reference proteome</keyword>
<proteinExistence type="inferred from homology"/>
<comment type="function">
    <text evidence="1">Together with its co-chaperonin GroES, plays an essential role in assisting protein folding. The GroEL-GroES system forms a nano-cage that allows encapsulation of the non-native substrate proteins and provides a physical environment optimized to promote and accelerate protein folding.</text>
</comment>
<comment type="catalytic activity">
    <reaction evidence="1">
        <text>ATP + H2O + a folded polypeptide = ADP + phosphate + an unfolded polypeptide.</text>
        <dbReference type="EC" id="5.6.1.7"/>
    </reaction>
</comment>
<comment type="subunit">
    <text evidence="1">Forms a cylinder of 14 subunits composed of two heptameric rings stacked back-to-back. Interacts with the co-chaperonin GroES.</text>
</comment>
<comment type="subcellular location">
    <subcellularLocation>
        <location evidence="1">Cytoplasm</location>
    </subcellularLocation>
</comment>
<comment type="similarity">
    <text evidence="1">Belongs to the chaperonin (HSP60) family.</text>
</comment>
<dbReference type="EC" id="5.6.1.7" evidence="1"/>
<dbReference type="EMBL" id="CP000576">
    <property type="protein sequence ID" value="ABO18249.1"/>
    <property type="molecule type" value="Genomic_DNA"/>
</dbReference>
<dbReference type="SMR" id="A3PES4"/>
<dbReference type="STRING" id="167546.P9301_16261"/>
<dbReference type="KEGG" id="pmg:P9301_16261"/>
<dbReference type="eggNOG" id="COG0459">
    <property type="taxonomic scope" value="Bacteria"/>
</dbReference>
<dbReference type="HOGENOM" id="CLU_016503_3_0_3"/>
<dbReference type="OrthoDB" id="9766614at2"/>
<dbReference type="Proteomes" id="UP000001430">
    <property type="component" value="Chromosome"/>
</dbReference>
<dbReference type="GO" id="GO:0005737">
    <property type="term" value="C:cytoplasm"/>
    <property type="evidence" value="ECO:0007669"/>
    <property type="project" value="UniProtKB-SubCell"/>
</dbReference>
<dbReference type="GO" id="GO:0005524">
    <property type="term" value="F:ATP binding"/>
    <property type="evidence" value="ECO:0007669"/>
    <property type="project" value="UniProtKB-UniRule"/>
</dbReference>
<dbReference type="GO" id="GO:0140662">
    <property type="term" value="F:ATP-dependent protein folding chaperone"/>
    <property type="evidence" value="ECO:0007669"/>
    <property type="project" value="InterPro"/>
</dbReference>
<dbReference type="GO" id="GO:0016853">
    <property type="term" value="F:isomerase activity"/>
    <property type="evidence" value="ECO:0007669"/>
    <property type="project" value="UniProtKB-KW"/>
</dbReference>
<dbReference type="GO" id="GO:0051082">
    <property type="term" value="F:unfolded protein binding"/>
    <property type="evidence" value="ECO:0007669"/>
    <property type="project" value="UniProtKB-UniRule"/>
</dbReference>
<dbReference type="GO" id="GO:0042026">
    <property type="term" value="P:protein refolding"/>
    <property type="evidence" value="ECO:0007669"/>
    <property type="project" value="UniProtKB-UniRule"/>
</dbReference>
<dbReference type="CDD" id="cd03344">
    <property type="entry name" value="GroEL"/>
    <property type="match status" value="1"/>
</dbReference>
<dbReference type="FunFam" id="3.50.7.10:FF:000001">
    <property type="entry name" value="60 kDa chaperonin"/>
    <property type="match status" value="1"/>
</dbReference>
<dbReference type="Gene3D" id="3.50.7.10">
    <property type="entry name" value="GroEL"/>
    <property type="match status" value="1"/>
</dbReference>
<dbReference type="Gene3D" id="1.10.560.10">
    <property type="entry name" value="GroEL-like equatorial domain"/>
    <property type="match status" value="1"/>
</dbReference>
<dbReference type="Gene3D" id="3.30.260.10">
    <property type="entry name" value="TCP-1-like chaperonin intermediate domain"/>
    <property type="match status" value="1"/>
</dbReference>
<dbReference type="HAMAP" id="MF_00600">
    <property type="entry name" value="CH60"/>
    <property type="match status" value="1"/>
</dbReference>
<dbReference type="InterPro" id="IPR018370">
    <property type="entry name" value="Chaperonin_Cpn60_CS"/>
</dbReference>
<dbReference type="InterPro" id="IPR001844">
    <property type="entry name" value="Cpn60/GroEL"/>
</dbReference>
<dbReference type="InterPro" id="IPR002423">
    <property type="entry name" value="Cpn60/GroEL/TCP-1"/>
</dbReference>
<dbReference type="InterPro" id="IPR027409">
    <property type="entry name" value="GroEL-like_apical_dom_sf"/>
</dbReference>
<dbReference type="InterPro" id="IPR027413">
    <property type="entry name" value="GROEL-like_equatorial_sf"/>
</dbReference>
<dbReference type="InterPro" id="IPR027410">
    <property type="entry name" value="TCP-1-like_intermed_sf"/>
</dbReference>
<dbReference type="NCBIfam" id="TIGR02348">
    <property type="entry name" value="GroEL"/>
    <property type="match status" value="1"/>
</dbReference>
<dbReference type="NCBIfam" id="NF000592">
    <property type="entry name" value="PRK00013.1"/>
    <property type="match status" value="1"/>
</dbReference>
<dbReference type="NCBIfam" id="NF009487">
    <property type="entry name" value="PRK12849.1"/>
    <property type="match status" value="1"/>
</dbReference>
<dbReference type="NCBIfam" id="NF009488">
    <property type="entry name" value="PRK12850.1"/>
    <property type="match status" value="1"/>
</dbReference>
<dbReference type="NCBIfam" id="NF009489">
    <property type="entry name" value="PRK12851.1"/>
    <property type="match status" value="1"/>
</dbReference>
<dbReference type="PANTHER" id="PTHR45633">
    <property type="entry name" value="60 KDA HEAT SHOCK PROTEIN, MITOCHONDRIAL"/>
    <property type="match status" value="1"/>
</dbReference>
<dbReference type="Pfam" id="PF00118">
    <property type="entry name" value="Cpn60_TCP1"/>
    <property type="match status" value="1"/>
</dbReference>
<dbReference type="PRINTS" id="PR00298">
    <property type="entry name" value="CHAPERONIN60"/>
</dbReference>
<dbReference type="SUPFAM" id="SSF52029">
    <property type="entry name" value="GroEL apical domain-like"/>
    <property type="match status" value="1"/>
</dbReference>
<dbReference type="SUPFAM" id="SSF48592">
    <property type="entry name" value="GroEL equatorial domain-like"/>
    <property type="match status" value="2"/>
</dbReference>
<dbReference type="PROSITE" id="PS00296">
    <property type="entry name" value="CHAPERONINS_CPN60"/>
    <property type="match status" value="1"/>
</dbReference>
<feature type="chain" id="PRO_0000332043" description="Chaperonin GroEL 2">
    <location>
        <begin position="1"/>
        <end position="545"/>
    </location>
</feature>
<feature type="binding site" evidence="1">
    <location>
        <begin position="29"/>
        <end position="32"/>
    </location>
    <ligand>
        <name>ATP</name>
        <dbReference type="ChEBI" id="CHEBI:30616"/>
    </ligand>
</feature>
<feature type="binding site" evidence="1">
    <location>
        <begin position="86"/>
        <end position="90"/>
    </location>
    <ligand>
        <name>ATP</name>
        <dbReference type="ChEBI" id="CHEBI:30616"/>
    </ligand>
</feature>
<feature type="binding site" evidence="1">
    <location>
        <position position="413"/>
    </location>
    <ligand>
        <name>ATP</name>
        <dbReference type="ChEBI" id="CHEBI:30616"/>
    </ligand>
</feature>
<feature type="binding site" evidence="1">
    <location>
        <begin position="479"/>
        <end position="481"/>
    </location>
    <ligand>
        <name>ATP</name>
        <dbReference type="ChEBI" id="CHEBI:30616"/>
    </ligand>
</feature>
<feature type="binding site" evidence="1">
    <location>
        <position position="495"/>
    </location>
    <ligand>
        <name>ATP</name>
        <dbReference type="ChEBI" id="CHEBI:30616"/>
    </ligand>
</feature>